<keyword id="KW-0240">DNA-directed RNA polymerase</keyword>
<keyword id="KW-0460">Magnesium</keyword>
<keyword id="KW-0479">Metal-binding</keyword>
<keyword id="KW-0548">Nucleotidyltransferase</keyword>
<keyword id="KW-0804">Transcription</keyword>
<keyword id="KW-0808">Transferase</keyword>
<keyword id="KW-0862">Zinc</keyword>
<dbReference type="EC" id="2.7.7.6" evidence="1"/>
<dbReference type="EMBL" id="AE017244">
    <property type="protein sequence ID" value="AAZ53979.1"/>
    <property type="molecule type" value="Genomic_DNA"/>
</dbReference>
<dbReference type="RefSeq" id="WP_011290399.1">
    <property type="nucleotide sequence ID" value="NC_007332.1"/>
</dbReference>
<dbReference type="SMR" id="Q4A7B0"/>
<dbReference type="KEGG" id="mhp:MHP7448_0616"/>
<dbReference type="HOGENOM" id="CLU_000524_3_1_14"/>
<dbReference type="Proteomes" id="UP000000553">
    <property type="component" value="Chromosome"/>
</dbReference>
<dbReference type="GO" id="GO:0000428">
    <property type="term" value="C:DNA-directed RNA polymerase complex"/>
    <property type="evidence" value="ECO:0007669"/>
    <property type="project" value="UniProtKB-KW"/>
</dbReference>
<dbReference type="GO" id="GO:0003677">
    <property type="term" value="F:DNA binding"/>
    <property type="evidence" value="ECO:0007669"/>
    <property type="project" value="UniProtKB-UniRule"/>
</dbReference>
<dbReference type="GO" id="GO:0003899">
    <property type="term" value="F:DNA-directed RNA polymerase activity"/>
    <property type="evidence" value="ECO:0007669"/>
    <property type="project" value="UniProtKB-UniRule"/>
</dbReference>
<dbReference type="GO" id="GO:0000287">
    <property type="term" value="F:magnesium ion binding"/>
    <property type="evidence" value="ECO:0007669"/>
    <property type="project" value="UniProtKB-UniRule"/>
</dbReference>
<dbReference type="GO" id="GO:0008270">
    <property type="term" value="F:zinc ion binding"/>
    <property type="evidence" value="ECO:0007669"/>
    <property type="project" value="UniProtKB-UniRule"/>
</dbReference>
<dbReference type="GO" id="GO:0006351">
    <property type="term" value="P:DNA-templated transcription"/>
    <property type="evidence" value="ECO:0007669"/>
    <property type="project" value="UniProtKB-UniRule"/>
</dbReference>
<dbReference type="CDD" id="cd02655">
    <property type="entry name" value="RNAP_beta'_C"/>
    <property type="match status" value="1"/>
</dbReference>
<dbReference type="Gene3D" id="1.10.132.30">
    <property type="match status" value="1"/>
</dbReference>
<dbReference type="Gene3D" id="1.10.150.390">
    <property type="match status" value="1"/>
</dbReference>
<dbReference type="Gene3D" id="1.10.1790.20">
    <property type="match status" value="1"/>
</dbReference>
<dbReference type="Gene3D" id="1.10.40.90">
    <property type="match status" value="1"/>
</dbReference>
<dbReference type="Gene3D" id="2.40.40.20">
    <property type="match status" value="1"/>
</dbReference>
<dbReference type="Gene3D" id="2.40.50.100">
    <property type="match status" value="1"/>
</dbReference>
<dbReference type="Gene3D" id="4.10.860.120">
    <property type="entry name" value="RNA polymerase II, clamp domain"/>
    <property type="match status" value="1"/>
</dbReference>
<dbReference type="Gene3D" id="1.10.274.100">
    <property type="entry name" value="RNA polymerase Rpb1, domain 3"/>
    <property type="match status" value="2"/>
</dbReference>
<dbReference type="HAMAP" id="MF_01322">
    <property type="entry name" value="RNApol_bact_RpoC"/>
    <property type="match status" value="1"/>
</dbReference>
<dbReference type="InterPro" id="IPR045867">
    <property type="entry name" value="DNA-dir_RpoC_beta_prime"/>
</dbReference>
<dbReference type="InterPro" id="IPR012754">
    <property type="entry name" value="DNA-dir_RpoC_beta_prime_bact"/>
</dbReference>
<dbReference type="InterPro" id="IPR000722">
    <property type="entry name" value="RNA_pol_asu"/>
</dbReference>
<dbReference type="InterPro" id="IPR006592">
    <property type="entry name" value="RNA_pol_N"/>
</dbReference>
<dbReference type="InterPro" id="IPR007080">
    <property type="entry name" value="RNA_pol_Rpb1_1"/>
</dbReference>
<dbReference type="InterPro" id="IPR007066">
    <property type="entry name" value="RNA_pol_Rpb1_3"/>
</dbReference>
<dbReference type="InterPro" id="IPR042102">
    <property type="entry name" value="RNA_pol_Rpb1_3_sf"/>
</dbReference>
<dbReference type="InterPro" id="IPR007083">
    <property type="entry name" value="RNA_pol_Rpb1_4"/>
</dbReference>
<dbReference type="InterPro" id="IPR007081">
    <property type="entry name" value="RNA_pol_Rpb1_5"/>
</dbReference>
<dbReference type="InterPro" id="IPR044893">
    <property type="entry name" value="RNA_pol_Rpb1_clamp_domain"/>
</dbReference>
<dbReference type="InterPro" id="IPR038120">
    <property type="entry name" value="Rpb1_funnel_sf"/>
</dbReference>
<dbReference type="NCBIfam" id="TIGR02386">
    <property type="entry name" value="rpoC_TIGR"/>
    <property type="match status" value="1"/>
</dbReference>
<dbReference type="PANTHER" id="PTHR19376">
    <property type="entry name" value="DNA-DIRECTED RNA POLYMERASE"/>
    <property type="match status" value="1"/>
</dbReference>
<dbReference type="PANTHER" id="PTHR19376:SF54">
    <property type="entry name" value="DNA-DIRECTED RNA POLYMERASE SUBUNIT BETA"/>
    <property type="match status" value="1"/>
</dbReference>
<dbReference type="Pfam" id="PF04997">
    <property type="entry name" value="RNA_pol_Rpb1_1"/>
    <property type="match status" value="1"/>
</dbReference>
<dbReference type="Pfam" id="PF00623">
    <property type="entry name" value="RNA_pol_Rpb1_2"/>
    <property type="match status" value="2"/>
</dbReference>
<dbReference type="Pfam" id="PF04983">
    <property type="entry name" value="RNA_pol_Rpb1_3"/>
    <property type="match status" value="1"/>
</dbReference>
<dbReference type="Pfam" id="PF05000">
    <property type="entry name" value="RNA_pol_Rpb1_4"/>
    <property type="match status" value="1"/>
</dbReference>
<dbReference type="Pfam" id="PF04998">
    <property type="entry name" value="RNA_pol_Rpb1_5"/>
    <property type="match status" value="1"/>
</dbReference>
<dbReference type="SMART" id="SM00663">
    <property type="entry name" value="RPOLA_N"/>
    <property type="match status" value="1"/>
</dbReference>
<dbReference type="SUPFAM" id="SSF64484">
    <property type="entry name" value="beta and beta-prime subunits of DNA dependent RNA-polymerase"/>
    <property type="match status" value="1"/>
</dbReference>
<proteinExistence type="inferred from homology"/>
<name>RPOC_MESH7</name>
<comment type="function">
    <text evidence="1">DNA-dependent RNA polymerase catalyzes the transcription of DNA into RNA using the four ribonucleoside triphosphates as substrates.</text>
</comment>
<comment type="catalytic activity">
    <reaction evidence="1">
        <text>RNA(n) + a ribonucleoside 5'-triphosphate = RNA(n+1) + diphosphate</text>
        <dbReference type="Rhea" id="RHEA:21248"/>
        <dbReference type="Rhea" id="RHEA-COMP:14527"/>
        <dbReference type="Rhea" id="RHEA-COMP:17342"/>
        <dbReference type="ChEBI" id="CHEBI:33019"/>
        <dbReference type="ChEBI" id="CHEBI:61557"/>
        <dbReference type="ChEBI" id="CHEBI:140395"/>
        <dbReference type="EC" id="2.7.7.6"/>
    </reaction>
</comment>
<comment type="cofactor">
    <cofactor evidence="1">
        <name>Mg(2+)</name>
        <dbReference type="ChEBI" id="CHEBI:18420"/>
    </cofactor>
    <text evidence="1">Binds 1 Mg(2+) ion per subunit.</text>
</comment>
<comment type="cofactor">
    <cofactor evidence="1">
        <name>Zn(2+)</name>
        <dbReference type="ChEBI" id="CHEBI:29105"/>
    </cofactor>
    <text evidence="2">Binds 1 Zn(2+) ion per subunit; 2 are expected compared to other organisms.</text>
</comment>
<comment type="subunit">
    <text evidence="1">The RNAP catalytic core consists of 2 alpha, 1 beta, 1 beta' and 1 omega subunit. When a sigma factor is associated with the core the holoenzyme is formed, which can initiate transcription.</text>
</comment>
<comment type="similarity">
    <text evidence="1">Belongs to the RNA polymerase beta' chain family.</text>
</comment>
<comment type="caution">
    <text evidence="2">The highly conserved N-terminal zinc-binding site of this subunit is not present in this sequence.</text>
</comment>
<evidence type="ECO:0000255" key="1">
    <source>
        <dbReference type="HAMAP-Rule" id="MF_01322"/>
    </source>
</evidence>
<evidence type="ECO:0000305" key="2"/>
<organism>
    <name type="scientific">Mesomycoplasma hyopneumoniae (strain 7448)</name>
    <name type="common">Mycoplasma hyopneumoniae</name>
    <dbReference type="NCBI Taxonomy" id="262722"/>
    <lineage>
        <taxon>Bacteria</taxon>
        <taxon>Bacillati</taxon>
        <taxon>Mycoplasmatota</taxon>
        <taxon>Mycoplasmoidales</taxon>
        <taxon>Metamycoplasmataceae</taxon>
        <taxon>Mesomycoplasma</taxon>
    </lineage>
</organism>
<reference key="1">
    <citation type="journal article" date="2005" name="J. Bacteriol.">
        <title>Swine and poultry pathogens: the complete genome sequences of two strains of Mycoplasma hyopneumoniae and a strain of Mycoplasma synoviae.</title>
        <authorList>
            <person name="Vasconcelos A.T.R."/>
            <person name="Ferreira H.B."/>
            <person name="Bizarro C.V."/>
            <person name="Bonatto S.L."/>
            <person name="Carvalho M.O."/>
            <person name="Pinto P.M."/>
            <person name="Almeida D.F."/>
            <person name="Almeida L.G.P."/>
            <person name="Almeida R."/>
            <person name="Alves-Junior L."/>
            <person name="Assuncao E.N."/>
            <person name="Azevedo V.A.C."/>
            <person name="Bogo M.R."/>
            <person name="Brigido M.M."/>
            <person name="Brocchi M."/>
            <person name="Burity H.A."/>
            <person name="Camargo A.A."/>
            <person name="Camargo S.S."/>
            <person name="Carepo M.S."/>
            <person name="Carraro D.M."/>
            <person name="de Mattos Cascardo J.C."/>
            <person name="Castro L.A."/>
            <person name="Cavalcanti G."/>
            <person name="Chemale G."/>
            <person name="Collevatti R.G."/>
            <person name="Cunha C.W."/>
            <person name="Dallagiovanna B."/>
            <person name="Dambros B.P."/>
            <person name="Dellagostin O.A."/>
            <person name="Falcao C."/>
            <person name="Fantinatti-Garboggini F."/>
            <person name="Felipe M.S.S."/>
            <person name="Fiorentin L."/>
            <person name="Franco G.R."/>
            <person name="Freitas N.S.A."/>
            <person name="Frias D."/>
            <person name="Grangeiro T.B."/>
            <person name="Grisard E.C."/>
            <person name="Guimaraes C.T."/>
            <person name="Hungria M."/>
            <person name="Jardim S.N."/>
            <person name="Krieger M.A."/>
            <person name="Laurino J.P."/>
            <person name="Lima L.F.A."/>
            <person name="Lopes M.I."/>
            <person name="Loreto E.L.S."/>
            <person name="Madeira H.M.F."/>
            <person name="Manfio G.P."/>
            <person name="Maranhao A.Q."/>
            <person name="Martinkovics C.T."/>
            <person name="Medeiros S.R.B."/>
            <person name="Moreira M.A.M."/>
            <person name="Neiva M."/>
            <person name="Ramalho-Neto C.E."/>
            <person name="Nicolas M.F."/>
            <person name="Oliveira S.C."/>
            <person name="Paixao R.F.C."/>
            <person name="Pedrosa F.O."/>
            <person name="Pena S.D.J."/>
            <person name="Pereira M."/>
            <person name="Pereira-Ferrari L."/>
            <person name="Piffer I."/>
            <person name="Pinto L.S."/>
            <person name="Potrich D.P."/>
            <person name="Salim A.C.M."/>
            <person name="Santos F.R."/>
            <person name="Schmitt R."/>
            <person name="Schneider M.P.C."/>
            <person name="Schrank A."/>
            <person name="Schrank I.S."/>
            <person name="Schuck A.F."/>
            <person name="Seuanez H.N."/>
            <person name="Silva D.W."/>
            <person name="Silva R."/>
            <person name="Silva S.C."/>
            <person name="Soares C.M.A."/>
            <person name="Souza K.R.L."/>
            <person name="Souza R.C."/>
            <person name="Staats C.C."/>
            <person name="Steffens M.B.R."/>
            <person name="Teixeira S.M.R."/>
            <person name="Urmenyi T.P."/>
            <person name="Vainstein M.H."/>
            <person name="Zuccherato L.W."/>
            <person name="Simpson A.J.G."/>
            <person name="Zaha A."/>
        </authorList>
    </citation>
    <scope>NUCLEOTIDE SEQUENCE [LARGE SCALE GENOMIC DNA]</scope>
    <source>
        <strain>7448</strain>
    </source>
</reference>
<protein>
    <recommendedName>
        <fullName evidence="1">DNA-directed RNA polymerase subunit beta'</fullName>
        <shortName evidence="1">RNAP subunit beta'</shortName>
        <ecNumber evidence="1">2.7.7.6</ecNumber>
    </recommendedName>
    <alternativeName>
        <fullName evidence="1">RNA polymerase subunit beta'</fullName>
    </alternativeName>
    <alternativeName>
        <fullName evidence="1">Transcriptase subunit beta'</fullName>
    </alternativeName>
</protein>
<sequence length="1412" mass="159396">MNTKVSRQYAKISENSIQKISLALATPEDVLEWSRGEVHRPETINYKTFKPERGGLFDELIFGPLVDYKCSVCGRKYRKSNENQLCIATKECKIRGSRILSKMARRYSMGHIALNAPILHFWFFKIDHSIIAKLLGLKVFEGNSKVPTTITKTAIENLIYYKSHIVLETGGLKSLEQNKIIDISEAGLIYKNALIEIIEFYPPGSEEHNALAESISELADVTSSKIGREYGVDYYELNEIIEEFSSARIATGALAIEYLLDKIDLRAEKAAVEAELAGVQKQIYKNKKIILKNQKRDKLYKRLQVINAFINSGQDPKMMIIRNLPVIPADLRPLVQLDGSRHSTSDCNELYRRIIIRNNRLKRWKAAHAPVIIIQNEMRMLQEAVDALIDNQKKSTNQVTTKEGRPLKSISDALTGKKGRFRQNLLGKRVDYSGRSVIVVGPKLKMHQAGLPRKMAAVLFEPWIIRNLIQEKKVGSIKMARKMIEEENPIIWPHVAKVIQNKPIILNRAPTLHRLSIQAFEPVLVRAKAIQLHPLVTAGFNADFDGDQMAVHIPISPEAIRETQELMFADKNILGPKDGEPIVNPSQDMVLGLYYLSQEKAGAKGEGSFFSTYEAMLKAYEFRSVELHARVVLPFEQVKPFIAKTMRGHLISTVGKFILNNIFPANFPFIFDDNVDELELNYPSQIKKYVLPYGTNFREYIQNLKVNEPLNKKAIAKIVRQIFDTYDGLLAKEDIATVIDQLDFGNYQNCVLLYEKLRDYKKQKLPVPHLSKLSEFTIFEYSQLYKQLQQNGPVESYRVLEDHEKAELLEKIWFKYNNMVCSILDKIKDLGFHYSTLSGTSIAISDIKMAPKKHEFIKEGENYINKLNTFYAKGLITDDERYVLAIAKWTQIKNDIQEDLNQSIKDDNQNSLVMMMKSGARGNISNFVQLAGMRGLMANNVKALKVDAENERVVRSIVEVPVKSSFLEGLTSFEFYSSTHGARKGLTDTALNTAKSGYLTRRLVDVAQNIVVVAEDCFSDFGFVVKDIIDTKTNTIIVPLLERIEGRFLNKDVYDSRGIKLASAGTMVDLQTAKKIVAAGIKKVEIRSILSCHIKNSVCKKCYGKDLATNRLVSIGEAVGIIAAQSIGEPGTQLTMRTFHTGGVANVEDITGGFTRLIELIDSHEHPWGKPAKISPYYGIITKISDLAEKNAANKGFLITIEYKTSKNEKAEHIIRIEQSQKLRVKVGDKVIPGQKLVEGPIILKELLAVSDARTLQNYLLKEIQRIYRMQGISISDKYIEIIIRQMLSKVQIIENGDSNFFIGSIVDISDYQEVNGQLISQNKNPAFGNVIVKGAKQIPLLSNSFLAAASYQETSKILVHSVISSQIDKLEGLKENIIVGHKIPAGTNSNYEPKSKFDIRNPLSFFMKNNR</sequence>
<feature type="chain" id="PRO_0000308863" description="DNA-directed RNA polymerase subunit beta'">
    <location>
        <begin position="1"/>
        <end position="1412"/>
    </location>
</feature>
<feature type="binding site" evidence="1">
    <location>
        <position position="543"/>
    </location>
    <ligand>
        <name>Mg(2+)</name>
        <dbReference type="ChEBI" id="CHEBI:18420"/>
    </ligand>
</feature>
<feature type="binding site" evidence="1">
    <location>
        <position position="545"/>
    </location>
    <ligand>
        <name>Mg(2+)</name>
        <dbReference type="ChEBI" id="CHEBI:18420"/>
    </ligand>
</feature>
<feature type="binding site" evidence="1">
    <location>
        <position position="547"/>
    </location>
    <ligand>
        <name>Mg(2+)</name>
        <dbReference type="ChEBI" id="CHEBI:18420"/>
    </ligand>
</feature>
<feature type="binding site" evidence="1">
    <location>
        <position position="1017"/>
    </location>
    <ligand>
        <name>Zn(2+)</name>
        <dbReference type="ChEBI" id="CHEBI:29105"/>
    </ligand>
</feature>
<feature type="binding site" evidence="1">
    <location>
        <position position="1092"/>
    </location>
    <ligand>
        <name>Zn(2+)</name>
        <dbReference type="ChEBI" id="CHEBI:29105"/>
    </ligand>
</feature>
<feature type="binding site" evidence="1">
    <location>
        <position position="1099"/>
    </location>
    <ligand>
        <name>Zn(2+)</name>
        <dbReference type="ChEBI" id="CHEBI:29105"/>
    </ligand>
</feature>
<feature type="binding site" evidence="1">
    <location>
        <position position="1102"/>
    </location>
    <ligand>
        <name>Zn(2+)</name>
        <dbReference type="ChEBI" id="CHEBI:29105"/>
    </ligand>
</feature>
<gene>
    <name evidence="1" type="primary">rpoC</name>
    <name type="ordered locus">MHP7448_0616</name>
</gene>
<accession>Q4A7B0</accession>